<name>SNO4_YEAST</name>
<feature type="chain" id="PRO_0000157853" description="Probable glutathione-independent glyoxalase SNO4">
    <location>
        <begin position="1"/>
        <end position="237"/>
    </location>
</feature>
<feature type="active site" evidence="1">
    <location>
        <position position="138"/>
    </location>
</feature>
<feature type="active site" evidence="1">
    <location>
        <position position="139"/>
    </location>
</feature>
<feature type="active site" evidence="1">
    <location>
        <position position="170"/>
    </location>
</feature>
<accession>Q04902</accession>
<accession>D6W0E9</accession>
<comment type="function">
    <text evidence="1 3">Catalyzes the conversion of methylglyoxal (MG) to D-lactate in a single glutathione (GSH)-independent step. May play a role in detoxifying endogenously produced glyoxals. Involved in protection against reactive oxygen species (ROS) (By similarity). Important for viability in stationary phase. May negatively regulate TORC1 in response to nutrient limitation (PubMed:24706893).</text>
</comment>
<comment type="catalytic activity">
    <reaction evidence="1">
        <text>methylglyoxal + H2O = (R)-lactate + H(+)</text>
        <dbReference type="Rhea" id="RHEA:27754"/>
        <dbReference type="ChEBI" id="CHEBI:15377"/>
        <dbReference type="ChEBI" id="CHEBI:15378"/>
        <dbReference type="ChEBI" id="CHEBI:16004"/>
        <dbReference type="ChEBI" id="CHEBI:17158"/>
        <dbReference type="EC" id="4.2.1.130"/>
    </reaction>
</comment>
<comment type="subunit">
    <text evidence="1">Homodimer.</text>
</comment>
<comment type="subcellular location">
    <subcellularLocation>
        <location evidence="1">Cytoplasm</location>
        <location evidence="1">P-body</location>
    </subcellularLocation>
    <text evidence="1">Present in processing bodies (P-bodies) and stress granule (SG) foci upon glucose starvation and heat shock.</text>
</comment>
<comment type="disruption phenotype">
    <text evidence="3">Results in higher sensitivity to oxidative stress, reduced thermotolerance, accumulation of higher levels of reactive oxygen species, and reduced chronological life span.</text>
</comment>
<comment type="similarity">
    <text evidence="6">Belongs to the peptidase C56 family. HSP31-like subfamily.</text>
</comment>
<evidence type="ECO:0000250" key="1">
    <source>
        <dbReference type="UniProtKB" id="Q04432"/>
    </source>
</evidence>
<evidence type="ECO:0000250" key="2">
    <source>
        <dbReference type="UniProtKB" id="Q5AF03"/>
    </source>
</evidence>
<evidence type="ECO:0000269" key="3">
    <source>
    </source>
</evidence>
<evidence type="ECO:0000303" key="4">
    <source>
    </source>
</evidence>
<evidence type="ECO:0000303" key="5">
    <source>
    </source>
</evidence>
<evidence type="ECO:0000305" key="6"/>
<evidence type="ECO:0000312" key="7">
    <source>
        <dbReference type="SGD" id="S000004941"/>
    </source>
</evidence>
<reference key="1">
    <citation type="journal article" date="1997" name="Nature">
        <title>The nucleotide sequence of Saccharomyces cerevisiae chromosome XIII.</title>
        <authorList>
            <person name="Bowman S."/>
            <person name="Churcher C.M."/>
            <person name="Badcock K."/>
            <person name="Brown D."/>
            <person name="Chillingworth T."/>
            <person name="Connor R."/>
            <person name="Dedman K."/>
            <person name="Devlin K."/>
            <person name="Gentles S."/>
            <person name="Hamlin N."/>
            <person name="Hunt S."/>
            <person name="Jagels K."/>
            <person name="Lye G."/>
            <person name="Moule S."/>
            <person name="Odell C."/>
            <person name="Pearson D."/>
            <person name="Rajandream M.A."/>
            <person name="Rice P."/>
            <person name="Skelton J."/>
            <person name="Walsh S.V."/>
            <person name="Whitehead S."/>
            <person name="Barrell B.G."/>
        </authorList>
    </citation>
    <scope>NUCLEOTIDE SEQUENCE [LARGE SCALE GENOMIC DNA]</scope>
    <source>
        <strain>ATCC 204508 / S288c</strain>
    </source>
</reference>
<reference key="2">
    <citation type="journal article" date="2014" name="G3 (Bethesda)">
        <title>The reference genome sequence of Saccharomyces cerevisiae: Then and now.</title>
        <authorList>
            <person name="Engel S.R."/>
            <person name="Dietrich F.S."/>
            <person name="Fisk D.G."/>
            <person name="Binkley G."/>
            <person name="Balakrishnan R."/>
            <person name="Costanzo M.C."/>
            <person name="Dwight S.S."/>
            <person name="Hitz B.C."/>
            <person name="Karra K."/>
            <person name="Nash R.S."/>
            <person name="Weng S."/>
            <person name="Wong E.D."/>
            <person name="Lloyd P."/>
            <person name="Skrzypek M.S."/>
            <person name="Miyasato S.R."/>
            <person name="Simison M."/>
            <person name="Cherry J.M."/>
        </authorList>
    </citation>
    <scope>GENOME REANNOTATION</scope>
    <source>
        <strain>ATCC 204508 / S288c</strain>
    </source>
</reference>
<reference key="3">
    <citation type="journal article" date="2003" name="Proc. Natl. Acad. Sci. U.S.A.">
        <title>Predicting protein functions from redundancies in large-scale protein interaction networks.</title>
        <authorList>
            <person name="Samanta M.P."/>
            <person name="Liang S."/>
        </authorList>
    </citation>
    <scope>GENE NAME</scope>
</reference>
<reference key="4">
    <citation type="journal article" date="2004" name="Proc. Natl. Acad. Sci. U.S.A.">
        <title>The 1.8-A resolution crystal structure of YDR533Cp from Saccharomyces cerevisiae: a member of the DJ-1/ThiJ/PfpI superfamily.</title>
        <authorList>
            <person name="Wilson M.A."/>
            <person name="St Amour C.V."/>
            <person name="Collins J.L."/>
            <person name="Ringe D."/>
            <person name="Petsko G.A."/>
        </authorList>
    </citation>
    <scope>GENE NAME</scope>
</reference>
<reference key="5">
    <citation type="journal article" date="2014" name="Proc. Natl. Acad. Sci. U.S.A.">
        <title>Yeast DJ-1 superfamily members are required for diauxic-shift reprogramming and cell survival in stationary phase.</title>
        <authorList>
            <person name="Miller-Fleming L."/>
            <person name="Antas P."/>
            <person name="Pais T.F."/>
            <person name="Smalley J.L."/>
            <person name="Giorgini F."/>
            <person name="Outeiro T.F."/>
        </authorList>
    </citation>
    <scope>DISRUPTION PHENOTYPE</scope>
</reference>
<keyword id="KW-0963">Cytoplasm</keyword>
<keyword id="KW-0456">Lyase</keyword>
<keyword id="KW-1185">Reference proteome</keyword>
<keyword id="KW-0346">Stress response</keyword>
<sequence length="237" mass="26040">MTPKRALISLTSYHGPFYKDGAKTGVFVVEILRSFDTFEKHGFEVDFVSETGGFGWDEHYLPKSFIGGEDKMNFETKNSAFNKALARIKTANEVNASDYKIFFASAGHGALFDYPKAKNLQDIASKIYANGGVIAAICHGPLLFDGLIDIKTTRPLIEGKAITGFPLEGEIALGVDDILRSRKLTTVERVANKNRAKYLAPIHPWDDYSITDGKLVTGVNANSSYSTTIRAINALYS</sequence>
<organism>
    <name type="scientific">Saccharomyces cerevisiae (strain ATCC 204508 / S288c)</name>
    <name type="common">Baker's yeast</name>
    <dbReference type="NCBI Taxonomy" id="559292"/>
    <lineage>
        <taxon>Eukaryota</taxon>
        <taxon>Fungi</taxon>
        <taxon>Dikarya</taxon>
        <taxon>Ascomycota</taxon>
        <taxon>Saccharomycotina</taxon>
        <taxon>Saccharomycetes</taxon>
        <taxon>Saccharomycetales</taxon>
        <taxon>Saccharomycetaceae</taxon>
        <taxon>Saccharomyces</taxon>
    </lineage>
</organism>
<protein>
    <recommendedName>
        <fullName evidence="1">Probable glutathione-independent glyoxalase SNO4</fullName>
        <ecNumber evidence="1">4.2.1.130</ecNumber>
    </recommendedName>
    <alternativeName>
        <fullName evidence="2">Glyoxalase 3 homolog 4</fullName>
    </alternativeName>
    <alternativeName>
        <fullName evidence="5">Heat shock protein 34</fullName>
    </alternativeName>
    <alternativeName>
        <fullName evidence="4">SNZ proximal open reading frame 4</fullName>
    </alternativeName>
</protein>
<gene>
    <name evidence="4" type="primary">SNO4</name>
    <name evidence="5" type="synonym">HSP34</name>
    <name evidence="7" type="ordered locus">YMR322C</name>
    <name type="ORF">YM9924.14C</name>
</gene>
<dbReference type="EC" id="4.2.1.130" evidence="1"/>
<dbReference type="EMBL" id="Z54141">
    <property type="protein sequence ID" value="CAA90840.1"/>
    <property type="molecule type" value="Genomic_DNA"/>
</dbReference>
<dbReference type="EMBL" id="BK006946">
    <property type="protein sequence ID" value="DAA10223.1"/>
    <property type="molecule type" value="Genomic_DNA"/>
</dbReference>
<dbReference type="RefSeq" id="NP_014055.1">
    <property type="nucleotide sequence ID" value="NM_001182835.1"/>
</dbReference>
<dbReference type="SMR" id="Q04902"/>
<dbReference type="BioGRID" id="35501">
    <property type="interactions" value="88"/>
</dbReference>
<dbReference type="DIP" id="DIP-1968N"/>
<dbReference type="FunCoup" id="Q04902">
    <property type="interactions" value="112"/>
</dbReference>
<dbReference type="IntAct" id="Q04902">
    <property type="interactions" value="8"/>
</dbReference>
<dbReference type="MINT" id="Q04902"/>
<dbReference type="STRING" id="4932.YMR322C"/>
<dbReference type="MEROPS" id="C56.A04"/>
<dbReference type="PaxDb" id="4932-YMR322C"/>
<dbReference type="PeptideAtlas" id="Q04902"/>
<dbReference type="EnsemblFungi" id="YMR322C_mRNA">
    <property type="protein sequence ID" value="YMR322C"/>
    <property type="gene ID" value="YMR322C"/>
</dbReference>
<dbReference type="GeneID" id="855372"/>
<dbReference type="KEGG" id="sce:YMR322C"/>
<dbReference type="AGR" id="SGD:S000004941"/>
<dbReference type="SGD" id="S000004941">
    <property type="gene designation" value="SNO4"/>
</dbReference>
<dbReference type="VEuPathDB" id="FungiDB:YMR322C"/>
<dbReference type="eggNOG" id="ENOG502RZ3Y">
    <property type="taxonomic scope" value="Eukaryota"/>
</dbReference>
<dbReference type="GeneTree" id="ENSGT00940000176307"/>
<dbReference type="HOGENOM" id="CLU_070319_1_0_1"/>
<dbReference type="InParanoid" id="Q04902"/>
<dbReference type="OrthoDB" id="543156at2759"/>
<dbReference type="BioCyc" id="YEAST:G3O-32985-MONOMER"/>
<dbReference type="PRO" id="PR:Q04902"/>
<dbReference type="Proteomes" id="UP000002311">
    <property type="component" value="Chromosome XIII"/>
</dbReference>
<dbReference type="RNAct" id="Q04902">
    <property type="molecule type" value="protein"/>
</dbReference>
<dbReference type="GO" id="GO:0005737">
    <property type="term" value="C:cytoplasm"/>
    <property type="evidence" value="ECO:0000318"/>
    <property type="project" value="GO_Central"/>
</dbReference>
<dbReference type="GO" id="GO:0000932">
    <property type="term" value="C:P-body"/>
    <property type="evidence" value="ECO:0007669"/>
    <property type="project" value="UniProtKB-SubCell"/>
</dbReference>
<dbReference type="GO" id="GO:0019172">
    <property type="term" value="F:glyoxalase III activity"/>
    <property type="evidence" value="ECO:0000314"/>
    <property type="project" value="SGD"/>
</dbReference>
<dbReference type="GO" id="GO:0031669">
    <property type="term" value="P:cellular response to nutrient levels"/>
    <property type="evidence" value="ECO:0000315"/>
    <property type="project" value="SGD"/>
</dbReference>
<dbReference type="GO" id="GO:0019243">
    <property type="term" value="P:methylglyoxal catabolic process to D-lactate via S-lactoyl-glutathione"/>
    <property type="evidence" value="ECO:0000318"/>
    <property type="project" value="GO_Central"/>
</dbReference>
<dbReference type="FunFam" id="3.40.50.880:FF:000051">
    <property type="entry name" value="Glutathione-independent glyoxalase HSP31"/>
    <property type="match status" value="1"/>
</dbReference>
<dbReference type="Gene3D" id="3.40.50.880">
    <property type="match status" value="1"/>
</dbReference>
<dbReference type="InterPro" id="IPR029062">
    <property type="entry name" value="Class_I_gatase-like"/>
</dbReference>
<dbReference type="InterPro" id="IPR050325">
    <property type="entry name" value="Prot/Nucl_acid_deglycase"/>
</dbReference>
<dbReference type="PANTHER" id="PTHR48094:SF11">
    <property type="entry name" value="GLUTATHIONE-INDEPENDENT GLYOXALASE HSP31-RELATED"/>
    <property type="match status" value="1"/>
</dbReference>
<dbReference type="PANTHER" id="PTHR48094">
    <property type="entry name" value="PROTEIN/NUCLEIC ACID DEGLYCASE DJ-1-RELATED"/>
    <property type="match status" value="1"/>
</dbReference>
<dbReference type="SUPFAM" id="SSF52317">
    <property type="entry name" value="Class I glutamine amidotransferase-like"/>
    <property type="match status" value="1"/>
</dbReference>
<proteinExistence type="inferred from homology"/>